<gene>
    <name evidence="1" type="primary">pheT</name>
    <name type="ordered locus">PD_1911</name>
</gene>
<organism>
    <name type="scientific">Xylella fastidiosa (strain Temecula1 / ATCC 700964)</name>
    <dbReference type="NCBI Taxonomy" id="183190"/>
    <lineage>
        <taxon>Bacteria</taxon>
        <taxon>Pseudomonadati</taxon>
        <taxon>Pseudomonadota</taxon>
        <taxon>Gammaproteobacteria</taxon>
        <taxon>Lysobacterales</taxon>
        <taxon>Lysobacteraceae</taxon>
        <taxon>Xylella</taxon>
    </lineage>
</organism>
<reference key="1">
    <citation type="journal article" date="2003" name="J. Bacteriol.">
        <title>Comparative analyses of the complete genome sequences of Pierce's disease and citrus variegated chlorosis strains of Xylella fastidiosa.</title>
        <authorList>
            <person name="Van Sluys M.A."/>
            <person name="de Oliveira M.C."/>
            <person name="Monteiro-Vitorello C.B."/>
            <person name="Miyaki C.Y."/>
            <person name="Furlan L.R."/>
            <person name="Camargo L.E.A."/>
            <person name="da Silva A.C.R."/>
            <person name="Moon D.H."/>
            <person name="Takita M.A."/>
            <person name="Lemos E.G.M."/>
            <person name="Machado M.A."/>
            <person name="Ferro M.I.T."/>
            <person name="da Silva F.R."/>
            <person name="Goldman M.H.S."/>
            <person name="Goldman G.H."/>
            <person name="Lemos M.V.F."/>
            <person name="El-Dorry H."/>
            <person name="Tsai S.M."/>
            <person name="Carrer H."/>
            <person name="Carraro D.M."/>
            <person name="de Oliveira R.C."/>
            <person name="Nunes L.R."/>
            <person name="Siqueira W.J."/>
            <person name="Coutinho L.L."/>
            <person name="Kimura E.T."/>
            <person name="Ferro E.S."/>
            <person name="Harakava R."/>
            <person name="Kuramae E.E."/>
            <person name="Marino C.L."/>
            <person name="Giglioti E."/>
            <person name="Abreu I.L."/>
            <person name="Alves L.M.C."/>
            <person name="do Amaral A.M."/>
            <person name="Baia G.S."/>
            <person name="Blanco S.R."/>
            <person name="Brito M.S."/>
            <person name="Cannavan F.S."/>
            <person name="Celestino A.V."/>
            <person name="da Cunha A.F."/>
            <person name="Fenille R.C."/>
            <person name="Ferro J.A."/>
            <person name="Formighieri E.F."/>
            <person name="Kishi L.T."/>
            <person name="Leoni S.G."/>
            <person name="Oliveira A.R."/>
            <person name="Rosa V.E. Jr."/>
            <person name="Sassaki F.T."/>
            <person name="Sena J.A.D."/>
            <person name="de Souza A.A."/>
            <person name="Truffi D."/>
            <person name="Tsukumo F."/>
            <person name="Yanai G.M."/>
            <person name="Zaros L.G."/>
            <person name="Civerolo E.L."/>
            <person name="Simpson A.J.G."/>
            <person name="Almeida N.F. Jr."/>
            <person name="Setubal J.C."/>
            <person name="Kitajima J.P."/>
        </authorList>
    </citation>
    <scope>NUCLEOTIDE SEQUENCE [LARGE SCALE GENOMIC DNA]</scope>
    <source>
        <strain>Temecula1 / ATCC 700964</strain>
    </source>
</reference>
<accession>Q87AB6</accession>
<feature type="chain" id="PRO_0000126992" description="Phenylalanine--tRNA ligase beta subunit">
    <location>
        <begin position="1"/>
        <end position="792"/>
    </location>
</feature>
<feature type="domain" description="tRNA-binding" evidence="1">
    <location>
        <begin position="39"/>
        <end position="147"/>
    </location>
</feature>
<feature type="domain" description="B5" evidence="1">
    <location>
        <begin position="400"/>
        <end position="475"/>
    </location>
</feature>
<feature type="domain" description="FDX-ACB" evidence="1">
    <location>
        <begin position="698"/>
        <end position="791"/>
    </location>
</feature>
<feature type="binding site" evidence="1">
    <location>
        <position position="453"/>
    </location>
    <ligand>
        <name>Mg(2+)</name>
        <dbReference type="ChEBI" id="CHEBI:18420"/>
        <note>shared with alpha subunit</note>
    </ligand>
</feature>
<feature type="binding site" evidence="1">
    <location>
        <position position="459"/>
    </location>
    <ligand>
        <name>Mg(2+)</name>
        <dbReference type="ChEBI" id="CHEBI:18420"/>
        <note>shared with alpha subunit</note>
    </ligand>
</feature>
<feature type="binding site" evidence="1">
    <location>
        <position position="462"/>
    </location>
    <ligand>
        <name>Mg(2+)</name>
        <dbReference type="ChEBI" id="CHEBI:18420"/>
        <note>shared with alpha subunit</note>
    </ligand>
</feature>
<feature type="binding site" evidence="1">
    <location>
        <position position="463"/>
    </location>
    <ligand>
        <name>Mg(2+)</name>
        <dbReference type="ChEBI" id="CHEBI:18420"/>
        <note>shared with alpha subunit</note>
    </ligand>
</feature>
<keyword id="KW-0030">Aminoacyl-tRNA synthetase</keyword>
<keyword id="KW-0067">ATP-binding</keyword>
<keyword id="KW-0963">Cytoplasm</keyword>
<keyword id="KW-0436">Ligase</keyword>
<keyword id="KW-0460">Magnesium</keyword>
<keyword id="KW-0479">Metal-binding</keyword>
<keyword id="KW-0547">Nucleotide-binding</keyword>
<keyword id="KW-0648">Protein biosynthesis</keyword>
<keyword id="KW-1185">Reference proteome</keyword>
<keyword id="KW-0694">RNA-binding</keyword>
<keyword id="KW-0820">tRNA-binding</keyword>
<dbReference type="EC" id="6.1.1.20" evidence="1"/>
<dbReference type="EMBL" id="AE009442">
    <property type="protein sequence ID" value="AAO29741.1"/>
    <property type="molecule type" value="Genomic_DNA"/>
</dbReference>
<dbReference type="RefSeq" id="WP_004090408.1">
    <property type="nucleotide sequence ID" value="NC_004556.1"/>
</dbReference>
<dbReference type="SMR" id="Q87AB6"/>
<dbReference type="GeneID" id="93905771"/>
<dbReference type="KEGG" id="xft:PD_1911"/>
<dbReference type="HOGENOM" id="CLU_016891_0_0_6"/>
<dbReference type="Proteomes" id="UP000002516">
    <property type="component" value="Chromosome"/>
</dbReference>
<dbReference type="GO" id="GO:0009328">
    <property type="term" value="C:phenylalanine-tRNA ligase complex"/>
    <property type="evidence" value="ECO:0007669"/>
    <property type="project" value="TreeGrafter"/>
</dbReference>
<dbReference type="GO" id="GO:0005524">
    <property type="term" value="F:ATP binding"/>
    <property type="evidence" value="ECO:0007669"/>
    <property type="project" value="UniProtKB-UniRule"/>
</dbReference>
<dbReference type="GO" id="GO:0000287">
    <property type="term" value="F:magnesium ion binding"/>
    <property type="evidence" value="ECO:0007669"/>
    <property type="project" value="UniProtKB-UniRule"/>
</dbReference>
<dbReference type="GO" id="GO:0004826">
    <property type="term" value="F:phenylalanine-tRNA ligase activity"/>
    <property type="evidence" value="ECO:0007669"/>
    <property type="project" value="UniProtKB-UniRule"/>
</dbReference>
<dbReference type="GO" id="GO:0000049">
    <property type="term" value="F:tRNA binding"/>
    <property type="evidence" value="ECO:0007669"/>
    <property type="project" value="UniProtKB-KW"/>
</dbReference>
<dbReference type="GO" id="GO:0006432">
    <property type="term" value="P:phenylalanyl-tRNA aminoacylation"/>
    <property type="evidence" value="ECO:0007669"/>
    <property type="project" value="UniProtKB-UniRule"/>
</dbReference>
<dbReference type="CDD" id="cd00769">
    <property type="entry name" value="PheRS_beta_core"/>
    <property type="match status" value="1"/>
</dbReference>
<dbReference type="CDD" id="cd02796">
    <property type="entry name" value="tRNA_bind_bactPheRS"/>
    <property type="match status" value="1"/>
</dbReference>
<dbReference type="FunFam" id="2.40.50.140:FF:000045">
    <property type="entry name" value="Phenylalanine--tRNA ligase beta subunit"/>
    <property type="match status" value="1"/>
</dbReference>
<dbReference type="FunFam" id="3.30.56.10:FF:000002">
    <property type="entry name" value="Phenylalanine--tRNA ligase beta subunit"/>
    <property type="match status" value="1"/>
</dbReference>
<dbReference type="FunFam" id="3.30.70.380:FF:000001">
    <property type="entry name" value="Phenylalanine--tRNA ligase beta subunit"/>
    <property type="match status" value="1"/>
</dbReference>
<dbReference type="FunFam" id="3.30.930.10:FF:000022">
    <property type="entry name" value="Phenylalanine--tRNA ligase beta subunit"/>
    <property type="match status" value="1"/>
</dbReference>
<dbReference type="FunFam" id="3.50.40.10:FF:000001">
    <property type="entry name" value="Phenylalanine--tRNA ligase beta subunit"/>
    <property type="match status" value="1"/>
</dbReference>
<dbReference type="Gene3D" id="3.30.56.10">
    <property type="match status" value="2"/>
</dbReference>
<dbReference type="Gene3D" id="3.30.930.10">
    <property type="entry name" value="Bira Bifunctional Protein, Domain 2"/>
    <property type="match status" value="1"/>
</dbReference>
<dbReference type="Gene3D" id="3.30.70.380">
    <property type="entry name" value="Ferrodoxin-fold anticodon-binding domain"/>
    <property type="match status" value="1"/>
</dbReference>
<dbReference type="Gene3D" id="2.40.50.140">
    <property type="entry name" value="Nucleic acid-binding proteins"/>
    <property type="match status" value="1"/>
</dbReference>
<dbReference type="Gene3D" id="3.50.40.10">
    <property type="entry name" value="Phenylalanyl-trna Synthetase, Chain B, domain 3"/>
    <property type="match status" value="1"/>
</dbReference>
<dbReference type="HAMAP" id="MF_00283">
    <property type="entry name" value="Phe_tRNA_synth_beta1"/>
    <property type="match status" value="1"/>
</dbReference>
<dbReference type="InterPro" id="IPR045864">
    <property type="entry name" value="aa-tRNA-synth_II/BPL/LPL"/>
</dbReference>
<dbReference type="InterPro" id="IPR005146">
    <property type="entry name" value="B3/B4_tRNA-bd"/>
</dbReference>
<dbReference type="InterPro" id="IPR009061">
    <property type="entry name" value="DNA-bd_dom_put_sf"/>
</dbReference>
<dbReference type="InterPro" id="IPR005121">
    <property type="entry name" value="Fdx_antiC-bd"/>
</dbReference>
<dbReference type="InterPro" id="IPR036690">
    <property type="entry name" value="Fdx_antiC-bd_sf"/>
</dbReference>
<dbReference type="InterPro" id="IPR012340">
    <property type="entry name" value="NA-bd_OB-fold"/>
</dbReference>
<dbReference type="InterPro" id="IPR045060">
    <property type="entry name" value="Phe-tRNA-ligase_IIc_bsu"/>
</dbReference>
<dbReference type="InterPro" id="IPR004532">
    <property type="entry name" value="Phe-tRNA-ligase_IIc_bsu_bact"/>
</dbReference>
<dbReference type="InterPro" id="IPR020825">
    <property type="entry name" value="Phe-tRNA_synthase-like_B3/B4"/>
</dbReference>
<dbReference type="InterPro" id="IPR041616">
    <property type="entry name" value="PheRS_beta_core"/>
</dbReference>
<dbReference type="InterPro" id="IPR002547">
    <property type="entry name" value="tRNA-bd_dom"/>
</dbReference>
<dbReference type="InterPro" id="IPR033714">
    <property type="entry name" value="tRNA_bind_bactPheRS"/>
</dbReference>
<dbReference type="InterPro" id="IPR005147">
    <property type="entry name" value="tRNA_synthase_B5-dom"/>
</dbReference>
<dbReference type="NCBIfam" id="TIGR00472">
    <property type="entry name" value="pheT_bact"/>
    <property type="match status" value="1"/>
</dbReference>
<dbReference type="NCBIfam" id="NF045760">
    <property type="entry name" value="YtpR"/>
    <property type="match status" value="1"/>
</dbReference>
<dbReference type="PANTHER" id="PTHR10947:SF0">
    <property type="entry name" value="PHENYLALANINE--TRNA LIGASE BETA SUBUNIT"/>
    <property type="match status" value="1"/>
</dbReference>
<dbReference type="PANTHER" id="PTHR10947">
    <property type="entry name" value="PHENYLALANYL-TRNA SYNTHETASE BETA CHAIN AND LEUCINE-RICH REPEAT-CONTAINING PROTEIN 47"/>
    <property type="match status" value="1"/>
</dbReference>
<dbReference type="Pfam" id="PF03483">
    <property type="entry name" value="B3_4"/>
    <property type="match status" value="1"/>
</dbReference>
<dbReference type="Pfam" id="PF03484">
    <property type="entry name" value="B5"/>
    <property type="match status" value="1"/>
</dbReference>
<dbReference type="Pfam" id="PF03147">
    <property type="entry name" value="FDX-ACB"/>
    <property type="match status" value="1"/>
</dbReference>
<dbReference type="Pfam" id="PF01588">
    <property type="entry name" value="tRNA_bind"/>
    <property type="match status" value="1"/>
</dbReference>
<dbReference type="Pfam" id="PF17759">
    <property type="entry name" value="tRNA_synthFbeta"/>
    <property type="match status" value="1"/>
</dbReference>
<dbReference type="SMART" id="SM00873">
    <property type="entry name" value="B3_4"/>
    <property type="match status" value="1"/>
</dbReference>
<dbReference type="SMART" id="SM00874">
    <property type="entry name" value="B5"/>
    <property type="match status" value="1"/>
</dbReference>
<dbReference type="SMART" id="SM00896">
    <property type="entry name" value="FDX-ACB"/>
    <property type="match status" value="1"/>
</dbReference>
<dbReference type="SUPFAM" id="SSF54991">
    <property type="entry name" value="Anticodon-binding domain of PheRS"/>
    <property type="match status" value="1"/>
</dbReference>
<dbReference type="SUPFAM" id="SSF55681">
    <property type="entry name" value="Class II aaRS and biotin synthetases"/>
    <property type="match status" value="1"/>
</dbReference>
<dbReference type="SUPFAM" id="SSF50249">
    <property type="entry name" value="Nucleic acid-binding proteins"/>
    <property type="match status" value="1"/>
</dbReference>
<dbReference type="SUPFAM" id="SSF56037">
    <property type="entry name" value="PheT/TilS domain"/>
    <property type="match status" value="1"/>
</dbReference>
<dbReference type="SUPFAM" id="SSF46955">
    <property type="entry name" value="Putative DNA-binding domain"/>
    <property type="match status" value="1"/>
</dbReference>
<dbReference type="PROSITE" id="PS51483">
    <property type="entry name" value="B5"/>
    <property type="match status" value="1"/>
</dbReference>
<dbReference type="PROSITE" id="PS51447">
    <property type="entry name" value="FDX_ACB"/>
    <property type="match status" value="1"/>
</dbReference>
<dbReference type="PROSITE" id="PS50886">
    <property type="entry name" value="TRBD"/>
    <property type="match status" value="1"/>
</dbReference>
<evidence type="ECO:0000255" key="1">
    <source>
        <dbReference type="HAMAP-Rule" id="MF_00283"/>
    </source>
</evidence>
<comment type="catalytic activity">
    <reaction evidence="1">
        <text>tRNA(Phe) + L-phenylalanine + ATP = L-phenylalanyl-tRNA(Phe) + AMP + diphosphate + H(+)</text>
        <dbReference type="Rhea" id="RHEA:19413"/>
        <dbReference type="Rhea" id="RHEA-COMP:9668"/>
        <dbReference type="Rhea" id="RHEA-COMP:9699"/>
        <dbReference type="ChEBI" id="CHEBI:15378"/>
        <dbReference type="ChEBI" id="CHEBI:30616"/>
        <dbReference type="ChEBI" id="CHEBI:33019"/>
        <dbReference type="ChEBI" id="CHEBI:58095"/>
        <dbReference type="ChEBI" id="CHEBI:78442"/>
        <dbReference type="ChEBI" id="CHEBI:78531"/>
        <dbReference type="ChEBI" id="CHEBI:456215"/>
        <dbReference type="EC" id="6.1.1.20"/>
    </reaction>
</comment>
<comment type="cofactor">
    <cofactor evidence="1">
        <name>Mg(2+)</name>
        <dbReference type="ChEBI" id="CHEBI:18420"/>
    </cofactor>
    <text evidence="1">Binds 2 magnesium ions per tetramer.</text>
</comment>
<comment type="subunit">
    <text evidence="1">Tetramer of two alpha and two beta subunits.</text>
</comment>
<comment type="subcellular location">
    <subcellularLocation>
        <location evidence="1">Cytoplasm</location>
    </subcellularLocation>
</comment>
<comment type="similarity">
    <text evidence="1">Belongs to the phenylalanyl-tRNA synthetase beta subunit family. Type 1 subfamily.</text>
</comment>
<sequence length="792" mass="86424">MKFSENWLRNHAPIQANRDVLVATLTAIGLEVENVAVLGEALDLILVARIVNVVPHPESDLLQICQVDVAQDTLLQIVCGASNVRPGLVVPLALLGAKIGALTIKSTTLRGIESNGMLCSAKELGLDTEASGLMELPEDAPIGTPLADYLALPDASIEIKLTPNRADCFSVRGIAFDVAAACASEVTPFHIDEIPAVSARTLPVELHAGANAPRYCGCVIEGIDPAAPTPVWMAERLRRSGIRPVSLLVDITQYVMLELGQPMHAFDVDTLRGPIGVRLSRNDEALKLLDGRTVVLDNDFLVVTDADQPIALAGLIGGWETRITDTTINVFLEAAHFAPAAIMGRGRKLGLHTDASHRFERGVDPALPPQAIAFATRLILELAGGKPGSLIHVQLPEYLPAPASILLRRTRIARLLGIVIDDAEVERILQALGMQVTTQAEGWRVVAPSRRFDIAIEEDLIEELVRIRGYEHLPTALPVGASHIAMPSETRLDMTSVRRQLIARELQETINYAFIDAELLRRWQLNTGQVMLMNPLSAELAVMRPRLLPGLVAALGRNIARQLERVRLFELGNVFTASDEAGAAPLETRHVAAAVCGDAFALQWGEQVRKVDFYDLKGDLESLAAASGAVLTFHSSAQPWGHPGRSADVWCDDMCIGWIGQLHPALTQTLEINVDVIAFELALEPLVRRALPRAHALSRFPFVRRDLACVVPEHVTWSELAITVRDVIGPLLRDVKLFDRYVGKGIEPGFKSLAIGLILQDDTRTLIDRDVDDIMTKVVMAIQQRHDVRIRS</sequence>
<proteinExistence type="inferred from homology"/>
<protein>
    <recommendedName>
        <fullName evidence="1">Phenylalanine--tRNA ligase beta subunit</fullName>
        <ecNumber evidence="1">6.1.1.20</ecNumber>
    </recommendedName>
    <alternativeName>
        <fullName evidence="1">Phenylalanyl-tRNA synthetase beta subunit</fullName>
        <shortName evidence="1">PheRS</shortName>
    </alternativeName>
</protein>
<name>SYFB_XYLFT</name>